<reference evidence="9" key="1">
    <citation type="journal article" date="1999" name="Nature">
        <title>The complete nucleotide sequence of chromosome 3 of Plasmodium falciparum.</title>
        <authorList>
            <person name="Bowman S."/>
            <person name="Lawson D."/>
            <person name="Basham D."/>
            <person name="Brown D."/>
            <person name="Chillingworth T."/>
            <person name="Churcher C.M."/>
            <person name="Craig A."/>
            <person name="Davies R.M."/>
            <person name="Devlin K."/>
            <person name="Feltwell T."/>
            <person name="Gentles S."/>
            <person name="Gwilliam R."/>
            <person name="Hamlin N."/>
            <person name="Harris D."/>
            <person name="Holroyd S."/>
            <person name="Hornsby T."/>
            <person name="Horrocks P."/>
            <person name="Jagels K."/>
            <person name="Jassal B."/>
            <person name="Kyes S."/>
            <person name="McLean J."/>
            <person name="Moule S."/>
            <person name="Mungall K.L."/>
            <person name="Murphy L."/>
            <person name="Oliver K."/>
            <person name="Quail M.A."/>
            <person name="Rajandream M.A."/>
            <person name="Rutter S."/>
            <person name="Skelton J."/>
            <person name="Squares R."/>
            <person name="Squares S."/>
            <person name="Sulston J.E."/>
            <person name="Whitehead S."/>
            <person name="Woodward J.R."/>
            <person name="Newbold C."/>
            <person name="Barrell B.G."/>
        </authorList>
    </citation>
    <scope>NUCLEOTIDE SEQUENCE [LARGE SCALE GENOMIC DNA]</scope>
    <source>
        <strain evidence="9">3D7</strain>
    </source>
</reference>
<reference evidence="9" key="2">
    <citation type="journal article" date="2002" name="Nature">
        <title>Genome sequence of the human malaria parasite Plasmodium falciparum.</title>
        <authorList>
            <person name="Gardner M.J."/>
            <person name="Hall N."/>
            <person name="Fung E."/>
            <person name="White O."/>
            <person name="Berriman M."/>
            <person name="Hyman R.W."/>
            <person name="Carlton J.M."/>
            <person name="Pain A."/>
            <person name="Nelson K.E."/>
            <person name="Bowman S."/>
            <person name="Paulsen I.T."/>
            <person name="James K.D."/>
            <person name="Eisen J.A."/>
            <person name="Rutherford K.M."/>
            <person name="Salzberg S.L."/>
            <person name="Craig A."/>
            <person name="Kyes S."/>
            <person name="Chan M.-S."/>
            <person name="Nene V."/>
            <person name="Shallom S.J."/>
            <person name="Suh B."/>
            <person name="Peterson J."/>
            <person name="Angiuoli S."/>
            <person name="Pertea M."/>
            <person name="Allen J."/>
            <person name="Selengut J."/>
            <person name="Haft D."/>
            <person name="Mather M.W."/>
            <person name="Vaidya A.B."/>
            <person name="Martin D.M.A."/>
            <person name="Fairlamb A.H."/>
            <person name="Fraunholz M.J."/>
            <person name="Roos D.S."/>
            <person name="Ralph S.A."/>
            <person name="McFadden G.I."/>
            <person name="Cummings L.M."/>
            <person name="Subramanian G.M."/>
            <person name="Mungall C."/>
            <person name="Venter J.C."/>
            <person name="Carucci D.J."/>
            <person name="Hoffman S.L."/>
            <person name="Newbold C."/>
            <person name="Davis R.W."/>
            <person name="Fraser C.M."/>
            <person name="Barrell B.G."/>
        </authorList>
    </citation>
    <scope>NUCLEOTIDE SEQUENCE [LARGE SCALE GENOMIC DNA]</scope>
    <source>
        <strain evidence="9">3D7</strain>
    </source>
</reference>
<reference evidence="9" key="3">
    <citation type="journal article" date="2002" name="Nature">
        <title>Sequence of Plasmodium falciparum chromosomes 1, 3-9 and 13.</title>
        <authorList>
            <person name="Hall N."/>
            <person name="Pain A."/>
            <person name="Berriman M."/>
            <person name="Churcher C.M."/>
            <person name="Harris B."/>
            <person name="Harris D."/>
            <person name="Mungall K.L."/>
            <person name="Bowman S."/>
            <person name="Atkin R."/>
            <person name="Baker S."/>
            <person name="Barron A."/>
            <person name="Brooks K."/>
            <person name="Buckee C.O."/>
            <person name="Burrows C."/>
            <person name="Cherevach I."/>
            <person name="Chillingworth C."/>
            <person name="Chillingworth T."/>
            <person name="Christodoulou Z."/>
            <person name="Clark L."/>
            <person name="Clark R."/>
            <person name="Corton C."/>
            <person name="Cronin A."/>
            <person name="Davies R.M."/>
            <person name="Davis P."/>
            <person name="Dear P."/>
            <person name="Dearden F."/>
            <person name="Doggett J."/>
            <person name="Feltwell T."/>
            <person name="Goble A."/>
            <person name="Goodhead I."/>
            <person name="Gwilliam R."/>
            <person name="Hamlin N."/>
            <person name="Hance Z."/>
            <person name="Harper D."/>
            <person name="Hauser H."/>
            <person name="Hornsby T."/>
            <person name="Holroyd S."/>
            <person name="Horrocks P."/>
            <person name="Humphray S."/>
            <person name="Jagels K."/>
            <person name="James K.D."/>
            <person name="Johnson D."/>
            <person name="Kerhornou A."/>
            <person name="Knights A."/>
            <person name="Konfortov B."/>
            <person name="Kyes S."/>
            <person name="Larke N."/>
            <person name="Lawson D."/>
            <person name="Lennard N."/>
            <person name="Line A."/>
            <person name="Maddison M."/>
            <person name="Mclean J."/>
            <person name="Mooney P."/>
            <person name="Moule S."/>
            <person name="Murphy L."/>
            <person name="Oliver K."/>
            <person name="Ormond D."/>
            <person name="Price C."/>
            <person name="Quail M.A."/>
            <person name="Rabbinowitsch E."/>
            <person name="Rajandream M.A."/>
            <person name="Rutter S."/>
            <person name="Rutherford K.M."/>
            <person name="Sanders M."/>
            <person name="Simmonds M."/>
            <person name="Seeger K."/>
            <person name="Sharp S."/>
            <person name="Smith R."/>
            <person name="Squares R."/>
            <person name="Squares S."/>
            <person name="Stevens K."/>
            <person name="Taylor K."/>
            <person name="Tivey A."/>
            <person name="Unwin L."/>
            <person name="Whitehead S."/>
            <person name="Woodward J.R."/>
            <person name="Sulston J.E."/>
            <person name="Craig A."/>
            <person name="Newbold C."/>
            <person name="Barrell B.G."/>
        </authorList>
    </citation>
    <scope>NUCLEOTIDE SEQUENCE [LARGE SCALE GENOMIC DNA]</scope>
    <source>
        <strain evidence="9">3D7</strain>
    </source>
</reference>
<reference evidence="6" key="4">
    <citation type="journal article" date="2022" name="PLoS Pathog.">
        <title>Deletion of the Plasmodium falciparum exported protein PTP7 leads to Maurer's clefts vesiculation, host cell remodeling defects, and loss of surface presentation of EMP1.</title>
        <authorList>
            <person name="Carmo O.M.S."/>
            <person name="Shami G.J."/>
            <person name="Cox D."/>
            <person name="Liu B."/>
            <person name="Blanch A.J."/>
            <person name="Tiash S."/>
            <person name="Tilley L."/>
            <person name="Dixon M.W.A."/>
        </authorList>
    </citation>
    <scope>FUNCTION</scope>
    <scope>INTERACTION WITH MESA AND PF3D7_0801000</scope>
    <scope>SUBCELLULAR LOCATION</scope>
    <scope>DEVELOPMENTAL STAGE</scope>
    <scope>DISRUPTION PHENOTYPE</scope>
    <scope>MUTAGENESIS OF 265-LYS--ASN-317; 278-ASN--ASN-310 AND 300-ASN--ASN-317</scope>
</reference>
<name>EPTP7_PLAF7</name>
<protein>
    <recommendedName>
        <fullName evidence="5">EMP1 trafficking protein-7</fullName>
    </recommendedName>
</protein>
<gene>
    <name evidence="5" type="primary">PTP7</name>
    <name evidence="8" type="ORF">PF3D7_0301700</name>
</gene>
<keyword id="KW-1035">Host cytoplasm</keyword>
<keyword id="KW-0472">Membrane</keyword>
<keyword id="KW-1185">Reference proteome</keyword>
<keyword id="KW-0732">Signal</keyword>
<keyword id="KW-0812">Transmembrane</keyword>
<keyword id="KW-1133">Transmembrane helix</keyword>
<keyword id="KW-0813">Transport</keyword>
<evidence type="ECO:0000250" key="1">
    <source>
        <dbReference type="UniProtKB" id="Q8I2D9"/>
    </source>
</evidence>
<evidence type="ECO:0000255" key="2"/>
<evidence type="ECO:0000256" key="3">
    <source>
        <dbReference type="SAM" id="MobiDB-lite"/>
    </source>
</evidence>
<evidence type="ECO:0000269" key="4">
    <source>
    </source>
</evidence>
<evidence type="ECO:0000303" key="5">
    <source>
    </source>
</evidence>
<evidence type="ECO:0000305" key="6"/>
<evidence type="ECO:0000305" key="7">
    <source>
    </source>
</evidence>
<evidence type="ECO:0000312" key="8">
    <source>
        <dbReference type="EMBL" id="CAB39133.2"/>
    </source>
</evidence>
<evidence type="ECO:0000312" key="9">
    <source>
        <dbReference type="Proteomes" id="UP000001450"/>
    </source>
</evidence>
<dbReference type="EMBL" id="AL844502">
    <property type="protein sequence ID" value="CAB39133.2"/>
    <property type="molecule type" value="Genomic_DNA"/>
</dbReference>
<dbReference type="RefSeq" id="XP_001351094.1">
    <property type="nucleotide sequence ID" value="XM_001351058.1"/>
</dbReference>
<dbReference type="SMR" id="O97336"/>
<dbReference type="FunCoup" id="O97336">
    <property type="interactions" value="42"/>
</dbReference>
<dbReference type="PaxDb" id="5833-PFC0085c"/>
<dbReference type="EnsemblProtists" id="CAB39133">
    <property type="protein sequence ID" value="CAB39133"/>
    <property type="gene ID" value="PF3D7_0301700"/>
</dbReference>
<dbReference type="GeneID" id="814335"/>
<dbReference type="KEGG" id="pfa:PF3D7_0301700"/>
<dbReference type="VEuPathDB" id="PlasmoDB:PF3D7_0301700"/>
<dbReference type="HOGENOM" id="CLU_1067408_0_0_1"/>
<dbReference type="InParanoid" id="O97336"/>
<dbReference type="OMA" id="HIIALYF"/>
<dbReference type="OrthoDB" id="377018at2759"/>
<dbReference type="PHI-base" id="PHI:123438"/>
<dbReference type="Proteomes" id="UP000001450">
    <property type="component" value="Chromosome 3"/>
</dbReference>
<dbReference type="GO" id="GO:0043657">
    <property type="term" value="C:host cell"/>
    <property type="evidence" value="ECO:0000314"/>
    <property type="project" value="UniProtKB"/>
</dbReference>
<dbReference type="GO" id="GO:0020036">
    <property type="term" value="C:Maurer's cleft"/>
    <property type="evidence" value="ECO:0000314"/>
    <property type="project" value="UniProtKB"/>
</dbReference>
<dbReference type="GO" id="GO:0016020">
    <property type="term" value="C:membrane"/>
    <property type="evidence" value="ECO:0007669"/>
    <property type="project" value="UniProtKB-SubCell"/>
</dbReference>
<dbReference type="GO" id="GO:0031982">
    <property type="term" value="C:vesicle"/>
    <property type="evidence" value="ECO:0007669"/>
    <property type="project" value="UniProtKB-SubCell"/>
</dbReference>
<dbReference type="GO" id="GO:0030581">
    <property type="term" value="P:symbiont intracellular protein transport in host"/>
    <property type="evidence" value="ECO:0000314"/>
    <property type="project" value="UniProtKB"/>
</dbReference>
<dbReference type="GO" id="GO:0016192">
    <property type="term" value="P:vesicle-mediated transport"/>
    <property type="evidence" value="ECO:0000315"/>
    <property type="project" value="UniProtKB"/>
</dbReference>
<dbReference type="InterPro" id="IPR053019">
    <property type="entry name" value="GATA_zinc_finger"/>
</dbReference>
<dbReference type="PANTHER" id="PTHR23353:SF23">
    <property type="entry name" value="PROTEIN HAIRLESS"/>
    <property type="match status" value="1"/>
</dbReference>
<dbReference type="PANTHER" id="PTHR23353">
    <property type="entry name" value="RAB-GAP/TBC-RELATED"/>
    <property type="match status" value="1"/>
</dbReference>
<accession>O97336</accession>
<organism evidence="9">
    <name type="scientific">Plasmodium falciparum (isolate 3D7)</name>
    <dbReference type="NCBI Taxonomy" id="36329"/>
    <lineage>
        <taxon>Eukaryota</taxon>
        <taxon>Sar</taxon>
        <taxon>Alveolata</taxon>
        <taxon>Apicomplexa</taxon>
        <taxon>Aconoidasida</taxon>
        <taxon>Haemosporida</taxon>
        <taxon>Plasmodiidae</taxon>
        <taxon>Plasmodium</taxon>
        <taxon>Plasmodium (Laverania)</taxon>
    </lineage>
</organism>
<comment type="function">
    <text evidence="4">During the asexual blood stage, plays an essential role in the recruitment and/or formation of EMP1-containing vesicles at the Maurer's clefts and their subsequent transfer to the host erythrocyte cell membrane.</text>
</comment>
<comment type="subunit">
    <text evidence="4">May interact with MESA (PubMed:35930605). May interact with J-dot compartment protein PF3D7_0801000 (PubMed:35930605).</text>
</comment>
<comment type="subcellular location">
    <subcellularLocation>
        <location evidence="4">Host cytoplasm</location>
    </subcellularLocation>
    <subcellularLocation>
        <location evidence="4">Vesicle</location>
    </subcellularLocation>
    <subcellularLocation>
        <location evidence="2">Membrane</location>
        <topology evidence="2">Single-pass membrane protein</topology>
    </subcellularLocation>
    <text evidence="4">In the host erythrocyte cytoplasm, localizes to Maurer's clefts, chaperone-containing structures known as J-dots, and EMP1-containing electron dense vesicles (EDVs).</text>
</comment>
<comment type="developmental stage">
    <text evidence="4">Expressed during the asexual blood stage, including rings and trophozoites (at protein level).</text>
</comment>
<comment type="domain">
    <text evidence="1 7">The P.falciparum Export Element (PEXEL) motif, also known as the vacuolar transport signal (VTS), is a pentameric sequence (RxLxE/Q/D) required for the translocation of proteins across the parasitophorous vacuole membrane (Probable). In the endoplasmic reticulum, the motif is cleaved after the leucine residue and the N-terminus is N-acetylated (By similarity).</text>
</comment>
<comment type="disruption phenotype">
    <text evidence="4">At the asexual blood stage, causes an accumulation of vesicles at the Maurer's clefts (PubMed:35930605). Aberrant knob morphology and distribution; knobs are fewer and larger (PubMed:35930605). EMP1 delivery to the Maurer's clefts is normal; however, EMP1 delivery to the host erythrocyte cell surface is abolished (PubMed:35930605).</text>
</comment>
<sequence>MAKDSQKNLNVSNNNNVQCTMGRSSQNINKSDSKGKIKRCTYAYKILLCTIFIWICQCFYNKSYYVYKKDGRRNKGKKILGIRINKSLAEMDHTKYHPEYYDEVQENYDPYYGVNQYSDECESYKSEDDDSEEEYYNSTPRVTVLEPQTENSEDEENYEKTIVDELNELPNDKKALILSYIRNGNDNNMQLLPYANNNKQNTQENISRNKEFFRHFVDFIKGYKLFDSPVLNALLPFIFIAFVYCTITMLVGNVRYIIALYILAKILKMHYDYKHKENNNNNNNNNNNNNNNNNNNNNNNNNNNNNNNNNNKKSKKN</sequence>
<proteinExistence type="evidence at protein level"/>
<feature type="signal peptide" evidence="7">
    <location>
        <begin position="1"/>
        <end status="unknown"/>
    </location>
</feature>
<feature type="chain" id="PRO_0000457120" description="EMP1 trafficking protein-7">
    <location>
        <begin status="unknown"/>
        <end position="317"/>
    </location>
</feature>
<feature type="transmembrane region" description="Helical" evidence="2">
    <location>
        <begin position="230"/>
        <end position="250"/>
    </location>
</feature>
<feature type="region of interest" description="Disordered" evidence="3">
    <location>
        <begin position="1"/>
        <end position="32"/>
    </location>
</feature>
<feature type="region of interest" description="Essential for its function" evidence="4">
    <location>
        <begin position="265"/>
        <end position="317"/>
    </location>
</feature>
<feature type="region of interest" description="Disordered" evidence="3">
    <location>
        <begin position="277"/>
        <end position="317"/>
    </location>
</feature>
<feature type="short sequence motif" description="PEXEL motif" evidence="7">
    <location>
        <begin position="86"/>
        <end position="90"/>
    </location>
</feature>
<feature type="compositionally biased region" description="Low complexity" evidence="3">
    <location>
        <begin position="8"/>
        <end position="17"/>
    </location>
</feature>
<feature type="compositionally biased region" description="Polar residues" evidence="3">
    <location>
        <begin position="18"/>
        <end position="30"/>
    </location>
</feature>
<feature type="compositionally biased region" description="Low complexity" evidence="3">
    <location>
        <begin position="279"/>
        <end position="311"/>
    </location>
</feature>
<feature type="mutagenesis site" description="Fewer and larger knobs. No EMP1 at the erythrocyte cell surface. Increase in the number of vesicles at the Maurer's clefts. PTP7 appears to be mislocalized." evidence="4">
    <location>
        <begin position="265"/>
        <end position="317"/>
    </location>
</feature>
<feature type="mutagenesis site" description="Slight decrease in knob density and slight increase in knob diameter. 65-percent reduction in EMP1 at the erythrocyte cell surface. PTP7 appears to be mislocalized." evidence="4">
    <location>
        <begin position="278"/>
        <end position="310"/>
    </location>
</feature>
<feature type="mutagenesis site" description="No significant effect on knob density and knob diameter. 32-percent reduction in EMP1 at the erythrocyte cell surface." evidence="4">
    <location>
        <begin position="300"/>
        <end position="317"/>
    </location>
</feature>